<protein>
    <recommendedName>
        <fullName evidence="1">Ribosome-binding factor A</fullName>
    </recommendedName>
</protein>
<gene>
    <name evidence="1" type="primary">rbfA</name>
    <name type="ordered locus">RALTA_A1849</name>
</gene>
<accession>B3R1E3</accession>
<dbReference type="EMBL" id="CU633749">
    <property type="protein sequence ID" value="CAQ69790.1"/>
    <property type="molecule type" value="Genomic_DNA"/>
</dbReference>
<dbReference type="RefSeq" id="WP_012353107.1">
    <property type="nucleotide sequence ID" value="NC_010528.1"/>
</dbReference>
<dbReference type="SMR" id="B3R1E3"/>
<dbReference type="GeneID" id="29763163"/>
<dbReference type="KEGG" id="cti:RALTA_A1849"/>
<dbReference type="eggNOG" id="COG0858">
    <property type="taxonomic scope" value="Bacteria"/>
</dbReference>
<dbReference type="HOGENOM" id="CLU_089475_5_1_4"/>
<dbReference type="BioCyc" id="CTAI977880:RALTA_RS08910-MONOMER"/>
<dbReference type="Proteomes" id="UP000001692">
    <property type="component" value="Chromosome 1"/>
</dbReference>
<dbReference type="GO" id="GO:0005829">
    <property type="term" value="C:cytosol"/>
    <property type="evidence" value="ECO:0007669"/>
    <property type="project" value="TreeGrafter"/>
</dbReference>
<dbReference type="GO" id="GO:0043024">
    <property type="term" value="F:ribosomal small subunit binding"/>
    <property type="evidence" value="ECO:0007669"/>
    <property type="project" value="TreeGrafter"/>
</dbReference>
<dbReference type="GO" id="GO:0030490">
    <property type="term" value="P:maturation of SSU-rRNA"/>
    <property type="evidence" value="ECO:0007669"/>
    <property type="project" value="UniProtKB-UniRule"/>
</dbReference>
<dbReference type="Gene3D" id="3.30.300.20">
    <property type="match status" value="1"/>
</dbReference>
<dbReference type="HAMAP" id="MF_00003">
    <property type="entry name" value="RbfA"/>
    <property type="match status" value="1"/>
</dbReference>
<dbReference type="InterPro" id="IPR015946">
    <property type="entry name" value="KH_dom-like_a/b"/>
</dbReference>
<dbReference type="InterPro" id="IPR000238">
    <property type="entry name" value="RbfA"/>
</dbReference>
<dbReference type="InterPro" id="IPR023799">
    <property type="entry name" value="RbfA_dom_sf"/>
</dbReference>
<dbReference type="NCBIfam" id="TIGR00082">
    <property type="entry name" value="rbfA"/>
    <property type="match status" value="1"/>
</dbReference>
<dbReference type="PANTHER" id="PTHR33515">
    <property type="entry name" value="RIBOSOME-BINDING FACTOR A, CHLOROPLASTIC-RELATED"/>
    <property type="match status" value="1"/>
</dbReference>
<dbReference type="PANTHER" id="PTHR33515:SF1">
    <property type="entry name" value="RIBOSOME-BINDING FACTOR A, CHLOROPLASTIC-RELATED"/>
    <property type="match status" value="1"/>
</dbReference>
<dbReference type="Pfam" id="PF02033">
    <property type="entry name" value="RBFA"/>
    <property type="match status" value="1"/>
</dbReference>
<dbReference type="SUPFAM" id="SSF89919">
    <property type="entry name" value="Ribosome-binding factor A, RbfA"/>
    <property type="match status" value="1"/>
</dbReference>
<evidence type="ECO:0000255" key="1">
    <source>
        <dbReference type="HAMAP-Rule" id="MF_00003"/>
    </source>
</evidence>
<proteinExistence type="inferred from homology"/>
<sequence length="123" mass="13929">MAKKGNISSRNLRISDQIQKDLAEMIQRELRDPRLGLVTLQSVTLTPDYAHAKVYFTVLGADAAETEAILNEKAGYLHSLLFKRLHIHTVPTLHFHHDTSVEHAIEMSRLINEANATRSKDED</sequence>
<keyword id="KW-0963">Cytoplasm</keyword>
<keyword id="KW-0690">Ribosome biogenesis</keyword>
<feature type="chain" id="PRO_1000088881" description="Ribosome-binding factor A">
    <location>
        <begin position="1"/>
        <end position="123"/>
    </location>
</feature>
<reference key="1">
    <citation type="journal article" date="2008" name="Genome Res.">
        <title>Genome sequence of the beta-rhizobium Cupriavidus taiwanensis and comparative genomics of rhizobia.</title>
        <authorList>
            <person name="Amadou C."/>
            <person name="Pascal G."/>
            <person name="Mangenot S."/>
            <person name="Glew M."/>
            <person name="Bontemps C."/>
            <person name="Capela D."/>
            <person name="Carrere S."/>
            <person name="Cruveiller S."/>
            <person name="Dossat C."/>
            <person name="Lajus A."/>
            <person name="Marchetti M."/>
            <person name="Poinsot V."/>
            <person name="Rouy Z."/>
            <person name="Servin B."/>
            <person name="Saad M."/>
            <person name="Schenowitz C."/>
            <person name="Barbe V."/>
            <person name="Batut J."/>
            <person name="Medigue C."/>
            <person name="Masson-Boivin C."/>
        </authorList>
    </citation>
    <scope>NUCLEOTIDE SEQUENCE [LARGE SCALE GENOMIC DNA]</scope>
    <source>
        <strain>DSM 17343 / BCRC 17206 / CCUG 44338 / CIP 107171 / LMG 19424 / R1</strain>
    </source>
</reference>
<name>RBFA_CUPTR</name>
<comment type="function">
    <text evidence="1">One of several proteins that assist in the late maturation steps of the functional core of the 30S ribosomal subunit. Associates with free 30S ribosomal subunits (but not with 30S subunits that are part of 70S ribosomes or polysomes). Required for efficient processing of 16S rRNA. May interact with the 5'-terminal helix region of 16S rRNA.</text>
</comment>
<comment type="subunit">
    <text evidence="1">Monomer. Binds 30S ribosomal subunits, but not 50S ribosomal subunits or 70S ribosomes.</text>
</comment>
<comment type="subcellular location">
    <subcellularLocation>
        <location evidence="1">Cytoplasm</location>
    </subcellularLocation>
</comment>
<comment type="similarity">
    <text evidence="1">Belongs to the RbfA family.</text>
</comment>
<organism>
    <name type="scientific">Cupriavidus taiwanensis (strain DSM 17343 / BCRC 17206 / CCUG 44338 / CIP 107171 / LMG 19424 / R1)</name>
    <name type="common">Ralstonia taiwanensis (strain LMG 19424)</name>
    <dbReference type="NCBI Taxonomy" id="977880"/>
    <lineage>
        <taxon>Bacteria</taxon>
        <taxon>Pseudomonadati</taxon>
        <taxon>Pseudomonadota</taxon>
        <taxon>Betaproteobacteria</taxon>
        <taxon>Burkholderiales</taxon>
        <taxon>Burkholderiaceae</taxon>
        <taxon>Cupriavidus</taxon>
    </lineage>
</organism>